<evidence type="ECO:0000250" key="1"/>
<evidence type="ECO:0000255" key="2"/>
<evidence type="ECO:0000255" key="3">
    <source>
        <dbReference type="PROSITE-ProRule" id="PRU01103"/>
    </source>
</evidence>
<evidence type="ECO:0000255" key="4">
    <source>
        <dbReference type="PROSITE-ProRule" id="PRU10094"/>
    </source>
</evidence>
<evidence type="ECO:0000305" key="5"/>
<keyword id="KW-0064">Aspartyl protease</keyword>
<keyword id="KW-0903">Direct protein sequencing</keyword>
<keyword id="KW-1015">Disulfide bond</keyword>
<keyword id="KW-0378">Hydrolase</keyword>
<keyword id="KW-0645">Protease</keyword>
<keyword id="KW-0732">Signal</keyword>
<keyword id="KW-0865">Zymogen</keyword>
<reference key="1">
    <citation type="journal article" date="1988" name="J. Bacteriol.">
        <title>Isolation and sequencing of a genomic clone encoding aspartic proteinase of Rhizopus niveus.</title>
        <authorList>
            <person name="Horiuchi H."/>
            <person name="Yanai K."/>
            <person name="Okazaki T."/>
            <person name="Takagi M."/>
            <person name="Yano K."/>
        </authorList>
    </citation>
    <scope>NUCLEOTIDE SEQUENCE [GENOMIC DNA]</scope>
    <scope>PARTIAL PROTEIN SEQUENCE</scope>
    <source>
        <strain>NBRC 4810 / AS 3.4817</strain>
    </source>
</reference>
<name>CARP1_RHINI</name>
<comment type="catalytic activity">
    <reaction>
        <text>Hydrolysis of proteins with broad specificity similar to that of pepsin A, preferring hydrophobic residues at P1 and P1'. Clots milk and activates trypsinogen. Does not cleave 4-Gln-|-His-5, but does cleave 10-His-|-Leu-11 and 12-Val-|-Glu-13 in B chain of insulin.</text>
        <dbReference type="EC" id="3.4.23.21"/>
    </reaction>
</comment>
<comment type="similarity">
    <text evidence="5">Belongs to the peptidase A1 family.</text>
</comment>
<accession>P10602</accession>
<proteinExistence type="evidence at protein level"/>
<organism>
    <name type="scientific">Rhizopus niveus</name>
    <dbReference type="NCBI Taxonomy" id="4844"/>
    <lineage>
        <taxon>Eukaryota</taxon>
        <taxon>Fungi</taxon>
        <taxon>Fungi incertae sedis</taxon>
        <taxon>Mucoromycota</taxon>
        <taxon>Mucoromycotina</taxon>
        <taxon>Mucoromycetes</taxon>
        <taxon>Mucorales</taxon>
        <taxon>Mucorineae</taxon>
        <taxon>Rhizopodaceae</taxon>
        <taxon>Rhizopus</taxon>
    </lineage>
</organism>
<gene>
    <name type="primary">RNAP</name>
</gene>
<dbReference type="EC" id="3.4.23.21"/>
<dbReference type="EMBL" id="M19100">
    <property type="protein sequence ID" value="AAA33882.1"/>
    <property type="molecule type" value="Genomic_DNA"/>
</dbReference>
<dbReference type="PIR" id="A28672">
    <property type="entry name" value="A28672"/>
</dbReference>
<dbReference type="SMR" id="P10602"/>
<dbReference type="MEROPS" id="A01.012"/>
<dbReference type="GO" id="GO:0004190">
    <property type="term" value="F:aspartic-type endopeptidase activity"/>
    <property type="evidence" value="ECO:0007669"/>
    <property type="project" value="UniProtKB-KW"/>
</dbReference>
<dbReference type="GO" id="GO:0006508">
    <property type="term" value="P:proteolysis"/>
    <property type="evidence" value="ECO:0007669"/>
    <property type="project" value="UniProtKB-KW"/>
</dbReference>
<dbReference type="FunFam" id="2.40.70.10:FF:000115">
    <property type="entry name" value="Lysosomal aspartic protease"/>
    <property type="match status" value="1"/>
</dbReference>
<dbReference type="Gene3D" id="2.40.70.10">
    <property type="entry name" value="Acid Proteases"/>
    <property type="match status" value="2"/>
</dbReference>
<dbReference type="InterPro" id="IPR001461">
    <property type="entry name" value="Aspartic_peptidase_A1"/>
</dbReference>
<dbReference type="InterPro" id="IPR001969">
    <property type="entry name" value="Aspartic_peptidase_AS"/>
</dbReference>
<dbReference type="InterPro" id="IPR033121">
    <property type="entry name" value="PEPTIDASE_A1"/>
</dbReference>
<dbReference type="InterPro" id="IPR021109">
    <property type="entry name" value="Peptidase_aspartic_dom_sf"/>
</dbReference>
<dbReference type="PANTHER" id="PTHR47966:SF1">
    <property type="entry name" value="ASPARTYL PROTEINASE"/>
    <property type="match status" value="1"/>
</dbReference>
<dbReference type="PANTHER" id="PTHR47966">
    <property type="entry name" value="BETA-SITE APP-CLEAVING ENZYME, ISOFORM A-RELATED"/>
    <property type="match status" value="1"/>
</dbReference>
<dbReference type="Pfam" id="PF00026">
    <property type="entry name" value="Asp"/>
    <property type="match status" value="1"/>
</dbReference>
<dbReference type="PRINTS" id="PR00792">
    <property type="entry name" value="PEPSIN"/>
</dbReference>
<dbReference type="SUPFAM" id="SSF50630">
    <property type="entry name" value="Acid proteases"/>
    <property type="match status" value="1"/>
</dbReference>
<dbReference type="PROSITE" id="PS00141">
    <property type="entry name" value="ASP_PROTEASE"/>
    <property type="match status" value="2"/>
</dbReference>
<dbReference type="PROSITE" id="PS51767">
    <property type="entry name" value="PEPTIDASE_A1"/>
    <property type="match status" value="1"/>
</dbReference>
<protein>
    <recommendedName>
        <fullName>Rhizopuspepsin-1</fullName>
        <ecNumber>3.4.23.21</ecNumber>
    </recommendedName>
    <alternativeName>
        <fullName>Aspartate protease</fullName>
    </alternativeName>
</protein>
<feature type="signal peptide" evidence="2">
    <location>
        <begin position="1"/>
        <end position="21"/>
    </location>
</feature>
<feature type="propeptide" id="PRO_0000025883" description="Activation peptide">
    <location>
        <begin position="22"/>
        <end position="66"/>
    </location>
</feature>
<feature type="chain" id="PRO_0000025884" description="Rhizopuspepsin-1">
    <location>
        <begin position="67"/>
        <end position="389"/>
    </location>
</feature>
<feature type="domain" description="Peptidase A1" evidence="3">
    <location>
        <begin position="82"/>
        <end position="385"/>
    </location>
</feature>
<feature type="active site" evidence="4">
    <location>
        <position position="100"/>
    </location>
</feature>
<feature type="active site" evidence="4">
    <location>
        <position position="283"/>
    </location>
</feature>
<feature type="disulfide bond" evidence="1">
    <location>
        <begin position="113"/>
        <end position="116"/>
    </location>
</feature>
<feature type="disulfide bond" evidence="1">
    <location>
        <begin position="317"/>
        <end position="350"/>
    </location>
</feature>
<sequence>MKFTLISSCVALAAMTLAVEAAPNGKKINIPLAKNNSYKPSAKNALNKALAKYNRRKVGSGGITTEASGSVPMVDYENDVEYYGEVTVGTPGIKLKLDFDTGSSDMWFASTLCSSCSNSHTKYDPKKSSTYAADGRTWSISYGDGSSASGILATDNVNLGGLLIKKQTIELAKRESSAFATDVIDGLLGLGFNTITTVRGVKTPVDNLISQGLISRPIFGVYLGKQSNGGGGEYIFGGYDSSKFKGSLTTVPIDNSEGFWGVTVKSTKIGGTTVSASFDAILDTGTTLLLLPDDVAAKVARSYGASDNGDGTYSITCDTSKLQPLVFTLGSSTFEVPSDSLIFEKDGNKCIAGFAAGGDLAILGDVFLKNNYVVFNQEVPEVQIAPVAN</sequence>